<feature type="signal peptide" evidence="1">
    <location>
        <begin position="1"/>
        <end position="20"/>
    </location>
</feature>
<feature type="chain" id="PRO_0000001374" description="Alpha-amylase-related protein">
    <location>
        <begin position="21"/>
        <end position="494"/>
    </location>
</feature>
<feature type="active site" description="Nucleophile" evidence="2">
    <location>
        <position position="208"/>
    </location>
</feature>
<feature type="active site" description="Proton donor" evidence="2">
    <location>
        <position position="245"/>
    </location>
</feature>
<feature type="binding site" evidence="3">
    <location>
        <position position="118"/>
    </location>
    <ligand>
        <name>Ca(2+)</name>
        <dbReference type="ChEBI" id="CHEBI:29108"/>
    </ligand>
</feature>
<feature type="binding site" evidence="3">
    <location>
        <position position="169"/>
    </location>
    <ligand>
        <name>Ca(2+)</name>
        <dbReference type="ChEBI" id="CHEBI:29108"/>
    </ligand>
</feature>
<feature type="binding site" evidence="3">
    <location>
        <position position="178"/>
    </location>
    <ligand>
        <name>Ca(2+)</name>
        <dbReference type="ChEBI" id="CHEBI:29108"/>
    </ligand>
</feature>
<feature type="binding site" evidence="3">
    <location>
        <position position="206"/>
    </location>
    <ligand>
        <name>chloride</name>
        <dbReference type="ChEBI" id="CHEBI:17996"/>
    </ligand>
</feature>
<feature type="binding site" evidence="3">
    <location>
        <position position="212"/>
    </location>
    <ligand>
        <name>Ca(2+)</name>
        <dbReference type="ChEBI" id="CHEBI:29108"/>
    </ligand>
</feature>
<feature type="binding site" evidence="3">
    <location>
        <position position="308"/>
    </location>
    <ligand>
        <name>chloride</name>
        <dbReference type="ChEBI" id="CHEBI:17996"/>
    </ligand>
</feature>
<feature type="binding site" evidence="3">
    <location>
        <position position="343"/>
    </location>
    <ligand>
        <name>chloride</name>
        <dbReference type="ChEBI" id="CHEBI:17996"/>
    </ligand>
</feature>
<feature type="site" description="Transition state stabilizer" evidence="2">
    <location>
        <position position="310"/>
    </location>
</feature>
<feature type="modified residue" description="Pyrrolidone carboxylic acid" evidence="1">
    <location>
        <position position="21"/>
    </location>
</feature>
<feature type="disulfide bond" evidence="3">
    <location>
        <begin position="48"/>
        <end position="104"/>
    </location>
</feature>
<feature type="disulfide bond" evidence="3">
    <location>
        <begin position="157"/>
        <end position="171"/>
    </location>
</feature>
<feature type="disulfide bond" evidence="3">
    <location>
        <begin position="376"/>
        <end position="382"/>
    </location>
</feature>
<feature type="disulfide bond" evidence="4">
    <location>
        <begin position="418"/>
        <end position="441"/>
    </location>
</feature>
<feature type="disulfide bond" evidence="3">
    <location>
        <begin position="448"/>
        <end position="460"/>
    </location>
</feature>
<proteinExistence type="inferred from homology"/>
<organism>
    <name type="scientific">Drosophila dossoui</name>
    <name type="common">Fruit fly</name>
    <dbReference type="NCBI Taxonomy" id="60716"/>
    <lineage>
        <taxon>Eukaryota</taxon>
        <taxon>Metazoa</taxon>
        <taxon>Ecdysozoa</taxon>
        <taxon>Arthropoda</taxon>
        <taxon>Hexapoda</taxon>
        <taxon>Insecta</taxon>
        <taxon>Pterygota</taxon>
        <taxon>Neoptera</taxon>
        <taxon>Endopterygota</taxon>
        <taxon>Diptera</taxon>
        <taxon>Brachycera</taxon>
        <taxon>Muscomorpha</taxon>
        <taxon>Ephydroidea</taxon>
        <taxon>Drosophilidae</taxon>
        <taxon>Drosophila</taxon>
        <taxon>Sophophora</taxon>
    </lineage>
</organism>
<accession>O77021</accession>
<keyword id="KW-0106">Calcium</keyword>
<keyword id="KW-0119">Carbohydrate metabolism</keyword>
<keyword id="KW-0868">Chloride</keyword>
<keyword id="KW-1015">Disulfide bond</keyword>
<keyword id="KW-0326">Glycosidase</keyword>
<keyword id="KW-0378">Hydrolase</keyword>
<keyword id="KW-0479">Metal-binding</keyword>
<keyword id="KW-0873">Pyrrolidone carboxylic acid</keyword>
<keyword id="KW-0964">Secreted</keyword>
<keyword id="KW-0732">Signal</keyword>
<dbReference type="EC" id="3.2.1.1" evidence="2"/>
<dbReference type="EMBL" id="U96164">
    <property type="protein sequence ID" value="AAC39114.2"/>
    <property type="molecule type" value="Genomic_DNA"/>
</dbReference>
<dbReference type="SMR" id="O77021"/>
<dbReference type="CAZy" id="GH13">
    <property type="family name" value="Glycoside Hydrolase Family 13"/>
</dbReference>
<dbReference type="GO" id="GO:0005576">
    <property type="term" value="C:extracellular region"/>
    <property type="evidence" value="ECO:0007669"/>
    <property type="project" value="UniProtKB-SubCell"/>
</dbReference>
<dbReference type="GO" id="GO:0004556">
    <property type="term" value="F:alpha-amylase activity"/>
    <property type="evidence" value="ECO:0007669"/>
    <property type="project" value="UniProtKB-EC"/>
</dbReference>
<dbReference type="GO" id="GO:0046872">
    <property type="term" value="F:metal ion binding"/>
    <property type="evidence" value="ECO:0007669"/>
    <property type="project" value="UniProtKB-KW"/>
</dbReference>
<dbReference type="GO" id="GO:0005975">
    <property type="term" value="P:carbohydrate metabolic process"/>
    <property type="evidence" value="ECO:0007669"/>
    <property type="project" value="InterPro"/>
</dbReference>
<dbReference type="CDD" id="cd11317">
    <property type="entry name" value="AmyAc_bac_euk_AmyA"/>
    <property type="match status" value="1"/>
</dbReference>
<dbReference type="FunFam" id="3.20.20.80:FF:000119">
    <property type="entry name" value="Alpha-amylase-related protein"/>
    <property type="match status" value="1"/>
</dbReference>
<dbReference type="FunFam" id="2.60.40.1180:FF:000020">
    <property type="entry name" value="Pancreatic alpha-amylase"/>
    <property type="match status" value="1"/>
</dbReference>
<dbReference type="Gene3D" id="3.20.20.80">
    <property type="entry name" value="Glycosidases"/>
    <property type="match status" value="1"/>
</dbReference>
<dbReference type="Gene3D" id="2.60.40.1180">
    <property type="entry name" value="Golgi alpha-mannosidase II"/>
    <property type="match status" value="1"/>
</dbReference>
<dbReference type="InterPro" id="IPR006048">
    <property type="entry name" value="A-amylase/branching_C"/>
</dbReference>
<dbReference type="InterPro" id="IPR031319">
    <property type="entry name" value="A-amylase_C"/>
</dbReference>
<dbReference type="InterPro" id="IPR006046">
    <property type="entry name" value="Alpha_amylase"/>
</dbReference>
<dbReference type="InterPro" id="IPR006047">
    <property type="entry name" value="Glyco_hydro_13_cat_dom"/>
</dbReference>
<dbReference type="InterPro" id="IPR013780">
    <property type="entry name" value="Glyco_hydro_b"/>
</dbReference>
<dbReference type="InterPro" id="IPR017853">
    <property type="entry name" value="Glycoside_hydrolase_SF"/>
</dbReference>
<dbReference type="PANTHER" id="PTHR43447">
    <property type="entry name" value="ALPHA-AMYLASE"/>
    <property type="match status" value="1"/>
</dbReference>
<dbReference type="Pfam" id="PF00128">
    <property type="entry name" value="Alpha-amylase"/>
    <property type="match status" value="1"/>
</dbReference>
<dbReference type="Pfam" id="PF02806">
    <property type="entry name" value="Alpha-amylase_C"/>
    <property type="match status" value="1"/>
</dbReference>
<dbReference type="PRINTS" id="PR00110">
    <property type="entry name" value="ALPHAAMYLASE"/>
</dbReference>
<dbReference type="SMART" id="SM00642">
    <property type="entry name" value="Aamy"/>
    <property type="match status" value="1"/>
</dbReference>
<dbReference type="SMART" id="SM00632">
    <property type="entry name" value="Aamy_C"/>
    <property type="match status" value="1"/>
</dbReference>
<dbReference type="SUPFAM" id="SSF51445">
    <property type="entry name" value="(Trans)glycosidases"/>
    <property type="match status" value="1"/>
</dbReference>
<dbReference type="SUPFAM" id="SSF51011">
    <property type="entry name" value="Glycosyl hydrolase domain"/>
    <property type="match status" value="1"/>
</dbReference>
<gene>
    <name type="primary">Amyrel</name>
</gene>
<name>AMYR_DRODO</name>
<reference key="1">
    <citation type="submission" date="2002-01" db="EMBL/GenBank/DDBJ databases">
        <authorList>
            <person name="Da Lage J.-L."/>
        </authorList>
    </citation>
    <scope>NUCLEOTIDE SEQUENCE [GENOMIC DNA]</scope>
</reference>
<sequence length="494" mass="55670">MFKFALALTLCLAGASLSLAQHNPQWWGSRNTIVHLFEWKWSDIAEECETFLAPRGFAGVQVSPVNENIISAGRPWWERYQPISYKLTTRSGNEEEFADMVRRCNDVGIRIYVDVLLNHMSGDFDGVAVGTAGTEAEPSKKSFPGVPYTAQDFHPSCEITDWNNRFQVQECELVGLKDLNQHSDYVRSKLIEFLDHLIELGVAGFRVDAAKHMAAEDLEYIYGSLSNLNIEHGFPHNARPFIFQEVIDHGHETVSRDEYNELGAVTEFRFSEEIGKAFRGNNALKWLQSWGSDWGFLNSEQALTFVDNHDNQRDHGSVLNYKSPKQYKMATAFHLAYPYGISRVMSSFAFDDHDTPPPQDAQENIISPEFDEDGACVNGWICEHRWRQIYAMVGFKNAVRDTELSGWWDNGDNQISFCRGNNGFLAVNNNLYDLSQELNTCLPAGEYCDVISGSLIDGACTGKSVTVNEHGYGYIHIGSDEFDGVLALHVNAKL</sequence>
<comment type="catalytic activity">
    <reaction evidence="2">
        <text>Endohydrolysis of (1-&gt;4)-alpha-D-glucosidic linkages in polysaccharides containing three or more (1-&gt;4)-alpha-linked D-glucose units.</text>
        <dbReference type="EC" id="3.2.1.1"/>
    </reaction>
</comment>
<comment type="cofactor">
    <cofactor evidence="3">
        <name>Ca(2+)</name>
        <dbReference type="ChEBI" id="CHEBI:29108"/>
    </cofactor>
    <text evidence="3">Binds 1 Ca(2+) ion per subunit.</text>
</comment>
<comment type="cofactor">
    <cofactor evidence="3">
        <name>chloride</name>
        <dbReference type="ChEBI" id="CHEBI:17996"/>
    </cofactor>
    <text evidence="3">Binds 1 Cl(-) ion per subunit.</text>
</comment>
<comment type="subunit">
    <text evidence="1">Monomer.</text>
</comment>
<comment type="subcellular location">
    <subcellularLocation>
        <location evidence="5">Secreted</location>
    </subcellularLocation>
</comment>
<comment type="similarity">
    <text evidence="5">Belongs to the glycosyl hydrolase 13 family.</text>
</comment>
<evidence type="ECO:0000250" key="1"/>
<evidence type="ECO:0000250" key="2">
    <source>
        <dbReference type="UniProtKB" id="P04746"/>
    </source>
</evidence>
<evidence type="ECO:0000250" key="3">
    <source>
        <dbReference type="UniProtKB" id="P56634"/>
    </source>
</evidence>
<evidence type="ECO:0000255" key="4"/>
<evidence type="ECO:0000305" key="5"/>
<protein>
    <recommendedName>
        <fullName>Alpha-amylase-related protein</fullName>
        <ecNumber evidence="2">3.2.1.1</ecNumber>
    </recommendedName>
</protein>